<comment type="function">
    <text evidence="1">The pyruvate dehydrogenase complex catalyzes the overall conversion of pyruvate to acetyl-CoA and CO(2). It contains multiple copies of three enzymatic components: pyruvate dehydrogenase (E1), dihydrolipoamide acetyltransferase (E2) and lipoamide dehydrogenase (E3) (By similarity).</text>
</comment>
<comment type="catalytic activity">
    <reaction>
        <text>N(6)-[(R)-lipoyl]-L-lysyl-[protein] + pyruvate + H(+) = N(6)-[(R)-S(8)-acetyldihydrolipoyl]-L-lysyl-[protein] + CO2</text>
        <dbReference type="Rhea" id="RHEA:19189"/>
        <dbReference type="Rhea" id="RHEA-COMP:10474"/>
        <dbReference type="Rhea" id="RHEA-COMP:10478"/>
        <dbReference type="ChEBI" id="CHEBI:15361"/>
        <dbReference type="ChEBI" id="CHEBI:15378"/>
        <dbReference type="ChEBI" id="CHEBI:16526"/>
        <dbReference type="ChEBI" id="CHEBI:83099"/>
        <dbReference type="ChEBI" id="CHEBI:83111"/>
        <dbReference type="EC" id="1.2.4.1"/>
    </reaction>
</comment>
<comment type="cofactor">
    <cofactor evidence="2">
        <name>thiamine diphosphate</name>
        <dbReference type="ChEBI" id="CHEBI:58937"/>
    </cofactor>
</comment>
<comment type="subunit">
    <text evidence="1">Heterodimer of an alpha and a beta chain.</text>
</comment>
<comment type="subcellular location">
    <subcellularLocation>
        <location>Plastid</location>
        <location>Chloroplast</location>
    </subcellularLocation>
</comment>
<accession>Q32RS0</accession>
<dbReference type="EC" id="1.2.4.1"/>
<dbReference type="EMBL" id="AY958085">
    <property type="protein sequence ID" value="AAX45708.1"/>
    <property type="molecule type" value="Genomic_DNA"/>
</dbReference>
<dbReference type="RefSeq" id="YP_636456.1">
    <property type="nucleotide sequence ID" value="NC_008116.1"/>
</dbReference>
<dbReference type="SMR" id="Q32RS0"/>
<dbReference type="GeneID" id="4108657"/>
<dbReference type="GO" id="GO:0009507">
    <property type="term" value="C:chloroplast"/>
    <property type="evidence" value="ECO:0007669"/>
    <property type="project" value="UniProtKB-SubCell"/>
</dbReference>
<dbReference type="GO" id="GO:0046872">
    <property type="term" value="F:metal ion binding"/>
    <property type="evidence" value="ECO:0007669"/>
    <property type="project" value="UniProtKB-KW"/>
</dbReference>
<dbReference type="GO" id="GO:0004739">
    <property type="term" value="F:pyruvate dehydrogenase (acetyl-transferring) activity"/>
    <property type="evidence" value="ECO:0007669"/>
    <property type="project" value="UniProtKB-EC"/>
</dbReference>
<dbReference type="CDD" id="cd07036">
    <property type="entry name" value="TPP_PYR_E1-PDHc-beta_like"/>
    <property type="match status" value="1"/>
</dbReference>
<dbReference type="FunFam" id="3.40.50.920:FF:000001">
    <property type="entry name" value="Pyruvate dehydrogenase E1 beta subunit"/>
    <property type="match status" value="1"/>
</dbReference>
<dbReference type="FunFam" id="3.40.50.970:FF:000001">
    <property type="entry name" value="Pyruvate dehydrogenase E1 beta subunit"/>
    <property type="match status" value="1"/>
</dbReference>
<dbReference type="Gene3D" id="3.40.50.920">
    <property type="match status" value="1"/>
</dbReference>
<dbReference type="Gene3D" id="3.40.50.970">
    <property type="match status" value="1"/>
</dbReference>
<dbReference type="InterPro" id="IPR029061">
    <property type="entry name" value="THDP-binding"/>
</dbReference>
<dbReference type="InterPro" id="IPR009014">
    <property type="entry name" value="Transketo_C/PFOR_II"/>
</dbReference>
<dbReference type="InterPro" id="IPR005475">
    <property type="entry name" value="Transketolase-like_Pyr-bd"/>
</dbReference>
<dbReference type="InterPro" id="IPR033248">
    <property type="entry name" value="Transketolase_C"/>
</dbReference>
<dbReference type="NCBIfam" id="NF006667">
    <property type="entry name" value="PRK09212.1"/>
    <property type="match status" value="1"/>
</dbReference>
<dbReference type="PANTHER" id="PTHR43257">
    <property type="entry name" value="PYRUVATE DEHYDROGENASE E1 COMPONENT BETA SUBUNIT"/>
    <property type="match status" value="1"/>
</dbReference>
<dbReference type="PANTHER" id="PTHR43257:SF2">
    <property type="entry name" value="PYRUVATE DEHYDROGENASE E1 COMPONENT SUBUNIT BETA"/>
    <property type="match status" value="1"/>
</dbReference>
<dbReference type="Pfam" id="PF02779">
    <property type="entry name" value="Transket_pyr"/>
    <property type="match status" value="1"/>
</dbReference>
<dbReference type="Pfam" id="PF02780">
    <property type="entry name" value="Transketolase_C"/>
    <property type="match status" value="1"/>
</dbReference>
<dbReference type="SMART" id="SM00861">
    <property type="entry name" value="Transket_pyr"/>
    <property type="match status" value="1"/>
</dbReference>
<dbReference type="SUPFAM" id="SSF52518">
    <property type="entry name" value="Thiamin diphosphate-binding fold (THDP-binding)"/>
    <property type="match status" value="1"/>
</dbReference>
<dbReference type="SUPFAM" id="SSF52922">
    <property type="entry name" value="TK C-terminal domain-like"/>
    <property type="match status" value="1"/>
</dbReference>
<keyword id="KW-0150">Chloroplast</keyword>
<keyword id="KW-0479">Metal-binding</keyword>
<keyword id="KW-0560">Oxidoreductase</keyword>
<keyword id="KW-0934">Plastid</keyword>
<keyword id="KW-0630">Potassium</keyword>
<keyword id="KW-0670">Pyruvate</keyword>
<keyword id="KW-0786">Thiamine pyrophosphate</keyword>
<evidence type="ECO:0000250" key="1"/>
<evidence type="ECO:0000250" key="2">
    <source>
        <dbReference type="UniProtKB" id="P11177"/>
    </source>
</evidence>
<protein>
    <recommendedName>
        <fullName>Pyruvate dehydrogenase E1 component subunit beta</fullName>
        <ecNumber>1.2.4.1</ecNumber>
    </recommendedName>
</protein>
<organism>
    <name type="scientific">Staurastrum punctulatum</name>
    <name type="common">Green alga</name>
    <name type="synonym">Cosmoastrum punctulatum</name>
    <dbReference type="NCBI Taxonomy" id="102822"/>
    <lineage>
        <taxon>Eukaryota</taxon>
        <taxon>Viridiplantae</taxon>
        <taxon>Streptophyta</taxon>
        <taxon>Zygnematophyceae</taxon>
        <taxon>Zygnematophycidae</taxon>
        <taxon>Desmidiales</taxon>
        <taxon>Desmidiaceae</taxon>
        <taxon>Staurastrum</taxon>
    </lineage>
</organism>
<proteinExistence type="inferred from homology"/>
<gene>
    <name type="primary">pdhB</name>
    <name type="synonym">odpB</name>
</gene>
<name>ODPB_STAPU</name>
<reference key="1">
    <citation type="journal article" date="2005" name="BMC Biol.">
        <title>The complete chloroplast DNA sequences of the charophycean green algae Staurastrum and Zygnema reveal that the chloroplast genome underwent extensive changes during the evolution of the Zygnematales.</title>
        <authorList>
            <person name="Turmel M."/>
            <person name="Otis C."/>
            <person name="Lemieux C."/>
        </authorList>
    </citation>
    <scope>NUCLEOTIDE SEQUENCE [LARGE SCALE GENOMIC DNA]</scope>
</reference>
<sequence length="328" mass="35943">MSEMLLFEALREGLQEEMDRDPKVLVMGEDVGHYGGSYKVTKGFAEKYGDLRLLDTPIAENSFTGMAIGAAMTGLRPVVEGMNMGFLLLAFNQIANNAGMLHYTSGANFTIPIVIRGPGGVGRQLGAEHSQRLESYFQSVPGLQLVACSTPINAKGLIKSSIRSENPVILFEHVLLYNLKETIPDNEYLVCLEKAEIVRPGTDITILTYSRMRHHVLQATKSLVYKGYDPEIIDIVSLKPVDLGTISTSIKKTHKVLIVEECMRTGGIGASLRATIMEHLFDFLDAPIMCLSSQDVPTPYSGPLEELTVIQPAQIVQAVEQLCNNGNN</sequence>
<feature type="chain" id="PRO_0000280104" description="Pyruvate dehydrogenase E1 component subunit beta">
    <location>
        <begin position="1"/>
        <end position="328"/>
    </location>
</feature>
<feature type="binding site" evidence="2">
    <location>
        <position position="60"/>
    </location>
    <ligand>
        <name>thiamine diphosphate</name>
        <dbReference type="ChEBI" id="CHEBI:58937"/>
        <note>ligand shared with alpha subunit</note>
    </ligand>
</feature>
<feature type="binding site" evidence="2">
    <location>
        <position position="113"/>
    </location>
    <ligand>
        <name>K(+)</name>
        <dbReference type="ChEBI" id="CHEBI:29103"/>
        <note>structural</note>
    </ligand>
</feature>
<feature type="binding site" evidence="2">
    <location>
        <position position="162"/>
    </location>
    <ligand>
        <name>K(+)</name>
        <dbReference type="ChEBI" id="CHEBI:29103"/>
        <note>structural</note>
    </ligand>
</feature>
<feature type="binding site" evidence="2">
    <location>
        <position position="166"/>
    </location>
    <ligand>
        <name>K(+)</name>
        <dbReference type="ChEBI" id="CHEBI:29103"/>
        <note>structural</note>
    </ligand>
</feature>
<geneLocation type="chloroplast"/>